<feature type="chain" id="PRO_1000063437" description="Phosphoribosyl-AMP cyclohydrolase">
    <location>
        <begin position="1"/>
        <end position="114"/>
    </location>
</feature>
<feature type="binding site" evidence="1">
    <location>
        <position position="76"/>
    </location>
    <ligand>
        <name>Mg(2+)</name>
        <dbReference type="ChEBI" id="CHEBI:18420"/>
    </ligand>
</feature>
<feature type="binding site" evidence="1">
    <location>
        <position position="77"/>
    </location>
    <ligand>
        <name>Zn(2+)</name>
        <dbReference type="ChEBI" id="CHEBI:29105"/>
        <note>ligand shared between dimeric partners</note>
    </ligand>
</feature>
<feature type="binding site" evidence="1">
    <location>
        <position position="78"/>
    </location>
    <ligand>
        <name>Mg(2+)</name>
        <dbReference type="ChEBI" id="CHEBI:18420"/>
    </ligand>
</feature>
<feature type="binding site" evidence="1">
    <location>
        <position position="80"/>
    </location>
    <ligand>
        <name>Mg(2+)</name>
        <dbReference type="ChEBI" id="CHEBI:18420"/>
    </ligand>
</feature>
<feature type="binding site" evidence="1">
    <location>
        <position position="93"/>
    </location>
    <ligand>
        <name>Zn(2+)</name>
        <dbReference type="ChEBI" id="CHEBI:29105"/>
        <note>ligand shared between dimeric partners</note>
    </ligand>
</feature>
<feature type="binding site" evidence="1">
    <location>
        <position position="100"/>
    </location>
    <ligand>
        <name>Zn(2+)</name>
        <dbReference type="ChEBI" id="CHEBI:29105"/>
        <note>ligand shared between dimeric partners</note>
    </ligand>
</feature>
<comment type="function">
    <text evidence="1">Catalyzes the hydrolysis of the adenine ring of phosphoribosyl-AMP.</text>
</comment>
<comment type="catalytic activity">
    <reaction evidence="1">
        <text>1-(5-phospho-beta-D-ribosyl)-5'-AMP + H2O = 1-(5-phospho-beta-D-ribosyl)-5-[(5-phospho-beta-D-ribosylamino)methylideneamino]imidazole-4-carboxamide</text>
        <dbReference type="Rhea" id="RHEA:20049"/>
        <dbReference type="ChEBI" id="CHEBI:15377"/>
        <dbReference type="ChEBI" id="CHEBI:58435"/>
        <dbReference type="ChEBI" id="CHEBI:59457"/>
        <dbReference type="EC" id="3.5.4.19"/>
    </reaction>
</comment>
<comment type="cofactor">
    <cofactor evidence="1">
        <name>Mg(2+)</name>
        <dbReference type="ChEBI" id="CHEBI:18420"/>
    </cofactor>
    <text evidence="1">Binds 1 Mg(2+) ion per subunit.</text>
</comment>
<comment type="cofactor">
    <cofactor evidence="1">
        <name>Zn(2+)</name>
        <dbReference type="ChEBI" id="CHEBI:29105"/>
    </cofactor>
    <text evidence="1">Binds 1 zinc ion per subunit.</text>
</comment>
<comment type="pathway">
    <text evidence="1">Amino-acid biosynthesis; L-histidine biosynthesis; L-histidine from 5-phospho-alpha-D-ribose 1-diphosphate: step 3/9.</text>
</comment>
<comment type="subunit">
    <text evidence="1">Homodimer.</text>
</comment>
<comment type="subcellular location">
    <subcellularLocation>
        <location evidence="1">Cytoplasm</location>
    </subcellularLocation>
</comment>
<comment type="similarity">
    <text evidence="1">Belongs to the PRA-CH family.</text>
</comment>
<sequence length="114" mass="13005">MTEVKLDFQKQGGLIPAIILDHTSKEVLMLAYLNEEAYQLTRTSGQMWYWSRSRQELWHKGATSGHYQTVKKITADCDLDTLLIEVDQLGAACHTGAKSCFFHPIWDEKDGKTD</sequence>
<keyword id="KW-0028">Amino-acid biosynthesis</keyword>
<keyword id="KW-0963">Cytoplasm</keyword>
<keyword id="KW-0368">Histidine biosynthesis</keyword>
<keyword id="KW-0378">Hydrolase</keyword>
<keyword id="KW-0460">Magnesium</keyword>
<keyword id="KW-0479">Metal-binding</keyword>
<keyword id="KW-1185">Reference proteome</keyword>
<keyword id="KW-0862">Zinc</keyword>
<proteinExistence type="inferred from homology"/>
<name>HIS3_STRSV</name>
<accession>A3CNS9</accession>
<evidence type="ECO:0000255" key="1">
    <source>
        <dbReference type="HAMAP-Rule" id="MF_01021"/>
    </source>
</evidence>
<gene>
    <name evidence="1" type="primary">hisI</name>
    <name type="ordered locus">SSA_1441</name>
</gene>
<reference key="1">
    <citation type="journal article" date="2007" name="J. Bacteriol.">
        <title>Genome of the opportunistic pathogen Streptococcus sanguinis.</title>
        <authorList>
            <person name="Xu P."/>
            <person name="Alves J.M."/>
            <person name="Kitten T."/>
            <person name="Brown A."/>
            <person name="Chen Z."/>
            <person name="Ozaki L.S."/>
            <person name="Manque P."/>
            <person name="Ge X."/>
            <person name="Serrano M.G."/>
            <person name="Puiu D."/>
            <person name="Hendricks S."/>
            <person name="Wang Y."/>
            <person name="Chaplin M.D."/>
            <person name="Akan D."/>
            <person name="Paik S."/>
            <person name="Peterson D.L."/>
            <person name="Macrina F.L."/>
            <person name="Buck G.A."/>
        </authorList>
    </citation>
    <scope>NUCLEOTIDE SEQUENCE [LARGE SCALE GENOMIC DNA]</scope>
    <source>
        <strain>SK36</strain>
    </source>
</reference>
<dbReference type="EC" id="3.5.4.19" evidence="1"/>
<dbReference type="EMBL" id="CP000387">
    <property type="protein sequence ID" value="ABN44834.1"/>
    <property type="molecule type" value="Genomic_DNA"/>
</dbReference>
<dbReference type="RefSeq" id="WP_011837138.1">
    <property type="nucleotide sequence ID" value="NC_009009.1"/>
</dbReference>
<dbReference type="RefSeq" id="YP_001035384.1">
    <property type="nucleotide sequence ID" value="NC_009009.1"/>
</dbReference>
<dbReference type="SMR" id="A3CNS9"/>
<dbReference type="STRING" id="388919.SSA_1441"/>
<dbReference type="KEGG" id="ssa:SSA_1441"/>
<dbReference type="PATRIC" id="fig|388919.9.peg.1366"/>
<dbReference type="eggNOG" id="COG0139">
    <property type="taxonomic scope" value="Bacteria"/>
</dbReference>
<dbReference type="HOGENOM" id="CLU_048577_5_3_9"/>
<dbReference type="OrthoDB" id="9795769at2"/>
<dbReference type="UniPathway" id="UPA00031">
    <property type="reaction ID" value="UER00008"/>
</dbReference>
<dbReference type="Proteomes" id="UP000002148">
    <property type="component" value="Chromosome"/>
</dbReference>
<dbReference type="GO" id="GO:0005737">
    <property type="term" value="C:cytoplasm"/>
    <property type="evidence" value="ECO:0007669"/>
    <property type="project" value="UniProtKB-SubCell"/>
</dbReference>
<dbReference type="GO" id="GO:0000287">
    <property type="term" value="F:magnesium ion binding"/>
    <property type="evidence" value="ECO:0007669"/>
    <property type="project" value="UniProtKB-UniRule"/>
</dbReference>
<dbReference type="GO" id="GO:0004635">
    <property type="term" value="F:phosphoribosyl-AMP cyclohydrolase activity"/>
    <property type="evidence" value="ECO:0007669"/>
    <property type="project" value="UniProtKB-UniRule"/>
</dbReference>
<dbReference type="GO" id="GO:0008270">
    <property type="term" value="F:zinc ion binding"/>
    <property type="evidence" value="ECO:0007669"/>
    <property type="project" value="UniProtKB-UniRule"/>
</dbReference>
<dbReference type="GO" id="GO:0000105">
    <property type="term" value="P:L-histidine biosynthetic process"/>
    <property type="evidence" value="ECO:0007669"/>
    <property type="project" value="UniProtKB-UniRule"/>
</dbReference>
<dbReference type="FunFam" id="3.10.20.810:FF:000001">
    <property type="entry name" value="Histidine biosynthesis bifunctional protein HisIE"/>
    <property type="match status" value="1"/>
</dbReference>
<dbReference type="Gene3D" id="3.10.20.810">
    <property type="entry name" value="Phosphoribosyl-AMP cyclohydrolase"/>
    <property type="match status" value="1"/>
</dbReference>
<dbReference type="HAMAP" id="MF_01021">
    <property type="entry name" value="HisI"/>
    <property type="match status" value="1"/>
</dbReference>
<dbReference type="InterPro" id="IPR026660">
    <property type="entry name" value="PRA-CH"/>
</dbReference>
<dbReference type="InterPro" id="IPR002496">
    <property type="entry name" value="PRib_AMP_CycHydrolase_dom"/>
</dbReference>
<dbReference type="InterPro" id="IPR038019">
    <property type="entry name" value="PRib_AMP_CycHydrolase_sf"/>
</dbReference>
<dbReference type="NCBIfam" id="NF000768">
    <property type="entry name" value="PRK00051.1"/>
    <property type="match status" value="1"/>
</dbReference>
<dbReference type="PANTHER" id="PTHR42945">
    <property type="entry name" value="HISTIDINE BIOSYNTHESIS BIFUNCTIONAL PROTEIN"/>
    <property type="match status" value="1"/>
</dbReference>
<dbReference type="PANTHER" id="PTHR42945:SF1">
    <property type="entry name" value="HISTIDINE BIOSYNTHESIS BIFUNCTIONAL PROTEIN HIS7"/>
    <property type="match status" value="1"/>
</dbReference>
<dbReference type="Pfam" id="PF01502">
    <property type="entry name" value="PRA-CH"/>
    <property type="match status" value="1"/>
</dbReference>
<dbReference type="SUPFAM" id="SSF141734">
    <property type="entry name" value="HisI-like"/>
    <property type="match status" value="1"/>
</dbReference>
<organism>
    <name type="scientific">Streptococcus sanguinis (strain SK36)</name>
    <dbReference type="NCBI Taxonomy" id="388919"/>
    <lineage>
        <taxon>Bacteria</taxon>
        <taxon>Bacillati</taxon>
        <taxon>Bacillota</taxon>
        <taxon>Bacilli</taxon>
        <taxon>Lactobacillales</taxon>
        <taxon>Streptococcaceae</taxon>
        <taxon>Streptococcus</taxon>
    </lineage>
</organism>
<protein>
    <recommendedName>
        <fullName evidence="1">Phosphoribosyl-AMP cyclohydrolase</fullName>
        <shortName evidence="1">PRA-CH</shortName>
        <ecNumber evidence="1">3.5.4.19</ecNumber>
    </recommendedName>
</protein>